<dbReference type="EMBL" id="AJ404687">
    <property type="protein sequence ID" value="CAC10492.1"/>
    <property type="molecule type" value="mRNA"/>
</dbReference>
<dbReference type="EMBL" id="AB242332">
    <property type="protein sequence ID" value="BAE48586.1"/>
    <property type="status" value="ALT_INIT"/>
    <property type="molecule type" value="mRNA"/>
</dbReference>
<dbReference type="EMBL" id="BC056835">
    <property type="protein sequence ID" value="AAH56835.1"/>
    <property type="molecule type" value="mRNA"/>
</dbReference>
<dbReference type="RefSeq" id="NP_571777.1">
    <property type="nucleotide sequence ID" value="NM_131702.1"/>
</dbReference>
<dbReference type="SMR" id="Q9DDD7"/>
<dbReference type="FunCoup" id="Q9DDD7">
    <property type="interactions" value="5"/>
</dbReference>
<dbReference type="STRING" id="7955.ENSDARP00000058909"/>
<dbReference type="iPTMnet" id="Q9DDD7"/>
<dbReference type="PaxDb" id="7955-ENSDARP00000058909"/>
<dbReference type="GeneID" id="64812"/>
<dbReference type="KEGG" id="dre:64812"/>
<dbReference type="AGR" id="ZFIN:ZDB-GENE-010111-1"/>
<dbReference type="CTD" id="64812"/>
<dbReference type="ZFIN" id="ZDB-GENE-010111-1">
    <property type="gene designation" value="sox19b"/>
</dbReference>
<dbReference type="eggNOG" id="KOG0527">
    <property type="taxonomic scope" value="Eukaryota"/>
</dbReference>
<dbReference type="InParanoid" id="Q9DDD7"/>
<dbReference type="OrthoDB" id="6247875at2759"/>
<dbReference type="PhylomeDB" id="Q9DDD7"/>
<dbReference type="Reactome" id="R-DRE-3769402">
    <property type="pathway name" value="Deactivation of the beta-catenin transactivating complex"/>
</dbReference>
<dbReference type="PRO" id="PR:Q9DDD7"/>
<dbReference type="Proteomes" id="UP000000437">
    <property type="component" value="Chromosome 7"/>
</dbReference>
<dbReference type="GO" id="GO:0005634">
    <property type="term" value="C:nucleus"/>
    <property type="evidence" value="ECO:0000318"/>
    <property type="project" value="GO_Central"/>
</dbReference>
<dbReference type="GO" id="GO:0005667">
    <property type="term" value="C:transcription regulator complex"/>
    <property type="evidence" value="ECO:0000305"/>
    <property type="project" value="ZFIN"/>
</dbReference>
<dbReference type="GO" id="GO:0001228">
    <property type="term" value="F:DNA-binding transcription activator activity, RNA polymerase II-specific"/>
    <property type="evidence" value="ECO:0000318"/>
    <property type="project" value="GO_Central"/>
</dbReference>
<dbReference type="GO" id="GO:0000978">
    <property type="term" value="F:RNA polymerase II cis-regulatory region sequence-specific DNA binding"/>
    <property type="evidence" value="ECO:0000318"/>
    <property type="project" value="GO_Central"/>
</dbReference>
<dbReference type="GO" id="GO:0007420">
    <property type="term" value="P:brain development"/>
    <property type="evidence" value="ECO:0000318"/>
    <property type="project" value="GO_Central"/>
</dbReference>
<dbReference type="GO" id="GO:0006338">
    <property type="term" value="P:chromatin remodeling"/>
    <property type="evidence" value="ECO:0000315"/>
    <property type="project" value="ZFIN"/>
</dbReference>
<dbReference type="GO" id="GO:0009950">
    <property type="term" value="P:dorsal/ventral axis specification"/>
    <property type="evidence" value="ECO:0000315"/>
    <property type="project" value="ZFIN"/>
</dbReference>
<dbReference type="GO" id="GO:0009953">
    <property type="term" value="P:dorsal/ventral pattern formation"/>
    <property type="evidence" value="ECO:0000314"/>
    <property type="project" value="ZFIN"/>
</dbReference>
<dbReference type="GO" id="GO:0055113">
    <property type="term" value="P:epiboly involved in gastrulation with mouth forming second"/>
    <property type="evidence" value="ECO:0000315"/>
    <property type="project" value="ZFIN"/>
</dbReference>
<dbReference type="GO" id="GO:0000122">
    <property type="term" value="P:negative regulation of transcription by RNA polymerase II"/>
    <property type="evidence" value="ECO:0000318"/>
    <property type="project" value="GO_Central"/>
</dbReference>
<dbReference type="GO" id="GO:0030182">
    <property type="term" value="P:neuron differentiation"/>
    <property type="evidence" value="ECO:0000318"/>
    <property type="project" value="GO_Central"/>
</dbReference>
<dbReference type="GO" id="GO:0045944">
    <property type="term" value="P:positive regulation of transcription by RNA polymerase II"/>
    <property type="evidence" value="ECO:0000318"/>
    <property type="project" value="GO_Central"/>
</dbReference>
<dbReference type="CDD" id="cd01388">
    <property type="entry name" value="HMG-box_SoxB"/>
    <property type="match status" value="1"/>
</dbReference>
<dbReference type="FunFam" id="1.10.30.10:FF:000002">
    <property type="entry name" value="transcription factor Sox-2"/>
    <property type="match status" value="1"/>
</dbReference>
<dbReference type="Gene3D" id="1.10.30.10">
    <property type="entry name" value="High mobility group box domain"/>
    <property type="match status" value="1"/>
</dbReference>
<dbReference type="InterPro" id="IPR009071">
    <property type="entry name" value="HMG_box_dom"/>
</dbReference>
<dbReference type="InterPro" id="IPR036910">
    <property type="entry name" value="HMG_box_dom_sf"/>
</dbReference>
<dbReference type="InterPro" id="IPR022097">
    <property type="entry name" value="SOX_fam"/>
</dbReference>
<dbReference type="InterPro" id="IPR050140">
    <property type="entry name" value="SRY-related_HMG-box_TF-like"/>
</dbReference>
<dbReference type="PANTHER" id="PTHR10270">
    <property type="entry name" value="SOX TRANSCRIPTION FACTOR"/>
    <property type="match status" value="1"/>
</dbReference>
<dbReference type="PANTHER" id="PTHR10270:SF283">
    <property type="entry name" value="TRANSCRIPTION FACTOR SOX-19A-RELATED"/>
    <property type="match status" value="1"/>
</dbReference>
<dbReference type="Pfam" id="PF00505">
    <property type="entry name" value="HMG_box"/>
    <property type="match status" value="1"/>
</dbReference>
<dbReference type="Pfam" id="PF12336">
    <property type="entry name" value="SOXp"/>
    <property type="match status" value="1"/>
</dbReference>
<dbReference type="SMART" id="SM00398">
    <property type="entry name" value="HMG"/>
    <property type="match status" value="1"/>
</dbReference>
<dbReference type="SUPFAM" id="SSF47095">
    <property type="entry name" value="HMG-box"/>
    <property type="match status" value="1"/>
</dbReference>
<dbReference type="PROSITE" id="PS50118">
    <property type="entry name" value="HMG_BOX_2"/>
    <property type="match status" value="1"/>
</dbReference>
<organism>
    <name type="scientific">Danio rerio</name>
    <name type="common">Zebrafish</name>
    <name type="synonym">Brachydanio rerio</name>
    <dbReference type="NCBI Taxonomy" id="7955"/>
    <lineage>
        <taxon>Eukaryota</taxon>
        <taxon>Metazoa</taxon>
        <taxon>Chordata</taxon>
        <taxon>Craniata</taxon>
        <taxon>Vertebrata</taxon>
        <taxon>Euteleostomi</taxon>
        <taxon>Actinopterygii</taxon>
        <taxon>Neopterygii</taxon>
        <taxon>Teleostei</taxon>
        <taxon>Ostariophysi</taxon>
        <taxon>Cypriniformes</taxon>
        <taxon>Danionidae</taxon>
        <taxon>Danioninae</taxon>
        <taxon>Danio</taxon>
    </lineage>
</organism>
<feature type="chain" id="PRO_0000238913" description="Transcription factor Sox-19b">
    <location>
        <begin position="1"/>
        <end position="292"/>
    </location>
</feature>
<feature type="DNA-binding region" description="HMG box" evidence="1">
    <location>
        <begin position="52"/>
        <end position="120"/>
    </location>
</feature>
<feature type="region of interest" description="Disordered" evidence="2">
    <location>
        <begin position="1"/>
        <end position="35"/>
    </location>
</feature>
<feature type="region of interest" description="Disordered" evidence="2">
    <location>
        <begin position="209"/>
        <end position="248"/>
    </location>
</feature>
<feature type="compositionally biased region" description="Basic and acidic residues" evidence="2">
    <location>
        <begin position="1"/>
        <end position="10"/>
    </location>
</feature>
<feature type="compositionally biased region" description="Low complexity" evidence="2">
    <location>
        <begin position="209"/>
        <end position="229"/>
    </location>
</feature>
<feature type="modified residue" description="Phosphoserine" evidence="5">
    <location>
        <position position="159"/>
    </location>
</feature>
<feature type="sequence conflict" description="In Ref. 2; BAE48586." evidence="6" ref="2">
    <original>P</original>
    <variation>S</variation>
    <location>
        <position position="136"/>
    </location>
</feature>
<gene>
    <name evidence="7" type="primary">sox19b</name>
    <name evidence="9" type="synonym">sox31</name>
</gene>
<evidence type="ECO:0000255" key="1">
    <source>
        <dbReference type="PROSITE-ProRule" id="PRU00267"/>
    </source>
</evidence>
<evidence type="ECO:0000256" key="2">
    <source>
        <dbReference type="SAM" id="MobiDB-lite"/>
    </source>
</evidence>
<evidence type="ECO:0000269" key="3">
    <source>
    </source>
</evidence>
<evidence type="ECO:0000269" key="4">
    <source>
    </source>
</evidence>
<evidence type="ECO:0000269" key="5">
    <source>
    </source>
</evidence>
<evidence type="ECO:0000305" key="6"/>
<evidence type="ECO:0000312" key="7">
    <source>
        <dbReference type="EMBL" id="AAH56835.1"/>
    </source>
</evidence>
<evidence type="ECO:0000312" key="8">
    <source>
        <dbReference type="EMBL" id="BAE48586.1"/>
    </source>
</evidence>
<evidence type="ECO:0000312" key="9">
    <source>
        <dbReference type="EMBL" id="CAC10492.1"/>
    </source>
</evidence>
<proteinExistence type="evidence at protein level"/>
<protein>
    <recommendedName>
        <fullName>Transcription factor Sox-19b</fullName>
    </recommendedName>
    <alternativeName>
        <fullName>Protein sox-31</fullName>
    </alternativeName>
</protein>
<reference evidence="6 9" key="1">
    <citation type="journal article" date="2001" name="Mech. Dev.">
        <title>Expression pattern of the Sox31 gene during zebrafish embryonic development.</title>
        <authorList>
            <person name="Girard F."/>
            <person name="Cremazy F."/>
            <person name="Berta P."/>
            <person name="Renucci A."/>
        </authorList>
    </citation>
    <scope>NUCLEOTIDE SEQUENCE [MRNA]</scope>
    <scope>DEVELOPMENTAL STAGE</scope>
</reference>
<reference evidence="6 8" key="2">
    <citation type="journal article" date="2006" name="Dev. Dyn.">
        <title>Comparative genomic and expression analysis of group B1 sox genes in zebrafish indicates their diversification during vertebrate evolution.</title>
        <authorList>
            <person name="Okuda Y."/>
            <person name="Yoda H."/>
            <person name="Uchikawa M."/>
            <person name="Furutani-Seiki M."/>
            <person name="Takeda H."/>
            <person name="Kondoh H."/>
            <person name="Kamachi Y."/>
        </authorList>
    </citation>
    <scope>NUCLEOTIDE SEQUENCE [MRNA]</scope>
    <scope>FUNCTION</scope>
    <scope>DEVELOPMENTAL STAGE</scope>
    <source>
        <tissue evidence="4">Embryo</tissue>
    </source>
</reference>
<reference evidence="7" key="3">
    <citation type="submission" date="2003-08" db="EMBL/GenBank/DDBJ databases">
        <authorList>
            <consortium name="NIH - Zebrafish Gene Collection (ZGC) project"/>
        </authorList>
    </citation>
    <scope>NUCLEOTIDE SEQUENCE [LARGE SCALE MRNA]</scope>
    <source>
        <strain evidence="7">AB</strain>
    </source>
</reference>
<reference key="4">
    <citation type="journal article" date="2008" name="J. Proteome Res.">
        <title>Online automated in vivo zebrafish phosphoproteomics: from large-scale analysis down to a single embryo.</title>
        <authorList>
            <person name="Lemeer S."/>
            <person name="Pinkse M.W.H."/>
            <person name="Mohammed S."/>
            <person name="van Breukelen B."/>
            <person name="den Hertog J."/>
            <person name="Slijper M."/>
            <person name="Heck A.J.R."/>
        </authorList>
    </citation>
    <scope>PHOSPHORYLATION [LARGE SCALE ANALYSIS] AT SER-159</scope>
    <scope>IDENTIFICATION BY MASS SPECTROMETRY</scope>
    <source>
        <tissue>Embryo</tissue>
    </source>
</reference>
<name>SX19B_DANRE</name>
<accession>Q9DDD7</accession>
<accession>Q2Z1Q8</accession>
<sequence length="292" mass="32218">MYSMMEHELKTAGPPHTLQHSPGMSPPGSGVGNAHHVSKTACPPGVDPMDKVKRPMNAFMVWSRGQRRKMAQENPKMHNSEISKRLGAEWKLLTDVEKRPFIDEAKRLRAVHMKEYPDYKYKPRRKTKALMKKDNPVGKYPLAAGNLLASAVAQGQGGSPRMDGYGWGHAGGYMGMQGDALGYPQQLHRYDLSALQYPAAQPYMNSASSYSQMSYSSSPQQPSPVMSMVKPEPLSHSPTGVPNHHRGAFQGDLRDMISMYIPGGDTSESSNQRAYPGVQQHYLGGTVPLTHI</sequence>
<keyword id="KW-0010">Activator</keyword>
<keyword id="KW-0217">Developmental protein</keyword>
<keyword id="KW-0238">DNA-binding</keyword>
<keyword id="KW-0539">Nucleus</keyword>
<keyword id="KW-0597">Phosphoprotein</keyword>
<keyword id="KW-1185">Reference proteome</keyword>
<keyword id="KW-0804">Transcription</keyword>
<keyword id="KW-0805">Transcription regulation</keyword>
<comment type="function">
    <text evidence="4">Transcriptional activator.</text>
</comment>
<comment type="subcellular location">
    <subcellularLocation>
        <location evidence="6">Nucleus</location>
    </subcellularLocation>
</comment>
<comment type="developmental stage">
    <text evidence="3 4">Expressed both maternally and zygotically. Distributed throughout the blastoderm at the blastua stage but becomes confined to the future ectoderm by the shield stage. Expressed in the presumptive neuroectoderm at the 75-80% epiboly stage. From the tail bud to the 3-somite stage, expressed throughout the neural plate, except in the anterior margin. At the 12- to 25-somite stage, expressed broadly in the central nervous system.</text>
</comment>
<comment type="sequence caution" evidence="6">
    <conflict type="erroneous initiation">
        <sequence resource="EMBL-CDS" id="BAE48586"/>
    </conflict>
</comment>